<accession>B5QV34</accession>
<comment type="function">
    <text evidence="1">Multidrug efflux pump that functions probably as a Na(+)/drug antiporter.</text>
</comment>
<comment type="subcellular location">
    <subcellularLocation>
        <location evidence="1">Cell inner membrane</location>
        <topology evidence="1">Multi-pass membrane protein</topology>
    </subcellularLocation>
</comment>
<comment type="similarity">
    <text evidence="1">Belongs to the multi antimicrobial extrusion (MATE) (TC 2.A.66.1) family. MdtK subfamily.</text>
</comment>
<gene>
    <name evidence="1" type="primary">mdtK</name>
    <name type="ordered locus">SEN1622</name>
</gene>
<dbReference type="EMBL" id="AM933172">
    <property type="protein sequence ID" value="CAR33204.1"/>
    <property type="molecule type" value="Genomic_DNA"/>
</dbReference>
<dbReference type="RefSeq" id="WP_001175071.1">
    <property type="nucleotide sequence ID" value="NC_011294.1"/>
</dbReference>
<dbReference type="SMR" id="B5QV34"/>
<dbReference type="KEGG" id="set:SEN1622"/>
<dbReference type="HOGENOM" id="CLU_012893_6_0_6"/>
<dbReference type="Proteomes" id="UP000000613">
    <property type="component" value="Chromosome"/>
</dbReference>
<dbReference type="GO" id="GO:0005886">
    <property type="term" value="C:plasma membrane"/>
    <property type="evidence" value="ECO:0007669"/>
    <property type="project" value="UniProtKB-SubCell"/>
</dbReference>
<dbReference type="GO" id="GO:0015297">
    <property type="term" value="F:antiporter activity"/>
    <property type="evidence" value="ECO:0007669"/>
    <property type="project" value="UniProtKB-UniRule"/>
</dbReference>
<dbReference type="GO" id="GO:0042910">
    <property type="term" value="F:xenobiotic transmembrane transporter activity"/>
    <property type="evidence" value="ECO:0007669"/>
    <property type="project" value="UniProtKB-UniRule"/>
</dbReference>
<dbReference type="GO" id="GO:0006814">
    <property type="term" value="P:sodium ion transport"/>
    <property type="evidence" value="ECO:0007669"/>
    <property type="project" value="UniProtKB-UniRule"/>
</dbReference>
<dbReference type="GO" id="GO:0006855">
    <property type="term" value="P:xenobiotic transmembrane transport"/>
    <property type="evidence" value="ECO:0007669"/>
    <property type="project" value="UniProtKB-UniRule"/>
</dbReference>
<dbReference type="CDD" id="cd13131">
    <property type="entry name" value="MATE_NorM_like"/>
    <property type="match status" value="1"/>
</dbReference>
<dbReference type="HAMAP" id="MF_00400">
    <property type="entry name" value="MdtK"/>
    <property type="match status" value="1"/>
</dbReference>
<dbReference type="InterPro" id="IPR002528">
    <property type="entry name" value="MATE_fam"/>
</dbReference>
<dbReference type="InterPro" id="IPR050222">
    <property type="entry name" value="MATE_MdtK"/>
</dbReference>
<dbReference type="InterPro" id="IPR048279">
    <property type="entry name" value="MdtK-like"/>
</dbReference>
<dbReference type="InterPro" id="IPR022913">
    <property type="entry name" value="Multidrug-R_MdtK"/>
</dbReference>
<dbReference type="NCBIfam" id="TIGR00797">
    <property type="entry name" value="matE"/>
    <property type="match status" value="1"/>
</dbReference>
<dbReference type="PANTHER" id="PTHR43298:SF2">
    <property type="entry name" value="FMN_FAD EXPORTER YEEO-RELATED"/>
    <property type="match status" value="1"/>
</dbReference>
<dbReference type="PANTHER" id="PTHR43298">
    <property type="entry name" value="MULTIDRUG RESISTANCE PROTEIN NORM-RELATED"/>
    <property type="match status" value="1"/>
</dbReference>
<dbReference type="Pfam" id="PF01554">
    <property type="entry name" value="MatE"/>
    <property type="match status" value="2"/>
</dbReference>
<dbReference type="PIRSF" id="PIRSF006603">
    <property type="entry name" value="DinF"/>
    <property type="match status" value="1"/>
</dbReference>
<sequence>MQKYTSEARQLLALAIPVILAQVAQTAMGFVDTVMAGGYSATDMAAVAIGTSIWLPAILFGHGLLLALTPVIAQLNGSGRRERIAHQVRQGFWLAGFVSVLVMIVLWNAGYIIRSMHNIDPALADKAVGYLRALLWGAPGYLFFQVARNQCEGLAKTKPGMVMGFLGLLVNIPVNYIFIYGHFGMPELGGIGCGVATAAVYWVMFIAMLSYIKHARSMRDIRNEKGFGKPDSIVMKRLIQLGLPIALALFFEVTLFAVVALLVSPLGIVDVAGHQIALNFSSLMFVLPMSLAAAVTIRVGYRLGQGSTLDAQTAARTGLGVGICMAVVTAIFTVTLRKHIALLYNDNPEVVALAAQLMLLAAVYQISDSIQVIGSGILRGYKDTRSIFFITFTAYWVLGLPSGYILALTDLVVDRMGPAGFWMGFIIGLTSAAVLMMLRMRYLQRQPSAIILQRAAR</sequence>
<protein>
    <recommendedName>
        <fullName evidence="1">Multidrug resistance protein MdtK</fullName>
    </recommendedName>
    <alternativeName>
        <fullName evidence="1">Multidrug-efflux transporter</fullName>
    </alternativeName>
</protein>
<reference key="1">
    <citation type="journal article" date="2008" name="Genome Res.">
        <title>Comparative genome analysis of Salmonella enteritidis PT4 and Salmonella gallinarum 287/91 provides insights into evolutionary and host adaptation pathways.</title>
        <authorList>
            <person name="Thomson N.R."/>
            <person name="Clayton D.J."/>
            <person name="Windhorst D."/>
            <person name="Vernikos G."/>
            <person name="Davidson S."/>
            <person name="Churcher C."/>
            <person name="Quail M.A."/>
            <person name="Stevens M."/>
            <person name="Jones M.A."/>
            <person name="Watson M."/>
            <person name="Barron A."/>
            <person name="Layton A."/>
            <person name="Pickard D."/>
            <person name="Kingsley R.A."/>
            <person name="Bignell A."/>
            <person name="Clark L."/>
            <person name="Harris B."/>
            <person name="Ormond D."/>
            <person name="Abdellah Z."/>
            <person name="Brooks K."/>
            <person name="Cherevach I."/>
            <person name="Chillingworth T."/>
            <person name="Woodward J."/>
            <person name="Norberczak H."/>
            <person name="Lord A."/>
            <person name="Arrowsmith C."/>
            <person name="Jagels K."/>
            <person name="Moule S."/>
            <person name="Mungall K."/>
            <person name="Saunders M."/>
            <person name="Whitehead S."/>
            <person name="Chabalgoity J.A."/>
            <person name="Maskell D."/>
            <person name="Humphreys T."/>
            <person name="Roberts M."/>
            <person name="Barrow P.A."/>
            <person name="Dougan G."/>
            <person name="Parkhill J."/>
        </authorList>
    </citation>
    <scope>NUCLEOTIDE SEQUENCE [LARGE SCALE GENOMIC DNA]</scope>
    <source>
        <strain>P125109</strain>
    </source>
</reference>
<proteinExistence type="inferred from homology"/>
<keyword id="KW-0050">Antiport</keyword>
<keyword id="KW-0997">Cell inner membrane</keyword>
<keyword id="KW-1003">Cell membrane</keyword>
<keyword id="KW-0406">Ion transport</keyword>
<keyword id="KW-0472">Membrane</keyword>
<keyword id="KW-0915">Sodium</keyword>
<keyword id="KW-0739">Sodium transport</keyword>
<keyword id="KW-0812">Transmembrane</keyword>
<keyword id="KW-1133">Transmembrane helix</keyword>
<keyword id="KW-0813">Transport</keyword>
<organism>
    <name type="scientific">Salmonella enteritidis PT4 (strain P125109)</name>
    <dbReference type="NCBI Taxonomy" id="550537"/>
    <lineage>
        <taxon>Bacteria</taxon>
        <taxon>Pseudomonadati</taxon>
        <taxon>Pseudomonadota</taxon>
        <taxon>Gammaproteobacteria</taxon>
        <taxon>Enterobacterales</taxon>
        <taxon>Enterobacteriaceae</taxon>
        <taxon>Salmonella</taxon>
    </lineage>
</organism>
<name>MDTK_SALEP</name>
<feature type="chain" id="PRO_1000191102" description="Multidrug resistance protein MdtK">
    <location>
        <begin position="1"/>
        <end position="457"/>
    </location>
</feature>
<feature type="transmembrane region" description="Helical" evidence="1">
    <location>
        <begin position="11"/>
        <end position="31"/>
    </location>
</feature>
<feature type="transmembrane region" description="Helical" evidence="1">
    <location>
        <begin position="53"/>
        <end position="73"/>
    </location>
</feature>
<feature type="transmembrane region" description="Helical" evidence="1">
    <location>
        <begin position="93"/>
        <end position="113"/>
    </location>
</feature>
<feature type="transmembrane region" description="Helical" evidence="1">
    <location>
        <begin position="127"/>
        <end position="147"/>
    </location>
</feature>
<feature type="transmembrane region" description="Helical" evidence="1">
    <location>
        <begin position="160"/>
        <end position="180"/>
    </location>
</feature>
<feature type="transmembrane region" description="Helical" evidence="1">
    <location>
        <begin position="188"/>
        <end position="208"/>
    </location>
</feature>
<feature type="transmembrane region" description="Helical" evidence="1">
    <location>
        <begin position="243"/>
        <end position="263"/>
    </location>
</feature>
<feature type="transmembrane region" description="Helical" evidence="1">
    <location>
        <begin position="276"/>
        <end position="296"/>
    </location>
</feature>
<feature type="transmembrane region" description="Helical" evidence="1">
    <location>
        <begin position="314"/>
        <end position="334"/>
    </location>
</feature>
<feature type="transmembrane region" description="Helical" evidence="1">
    <location>
        <begin position="350"/>
        <end position="370"/>
    </location>
</feature>
<feature type="transmembrane region" description="Helical" evidence="1">
    <location>
        <begin position="387"/>
        <end position="407"/>
    </location>
</feature>
<feature type="transmembrane region" description="Helical" evidence="1">
    <location>
        <begin position="418"/>
        <end position="438"/>
    </location>
</feature>
<evidence type="ECO:0000255" key="1">
    <source>
        <dbReference type="HAMAP-Rule" id="MF_00400"/>
    </source>
</evidence>